<name>VPS72_MOUSE</name>
<proteinExistence type="evidence at protein level"/>
<comment type="function">
    <text evidence="1">Deposition-and-exchange histone chaperone specific for H2AZ1, specifically chaperones H2AZ1 and deposits it into nucleosomes. As component of the SRCAP complex, mediates the ATP-dependent exchange of histone H2AZ1/H2B dimers for nucleosomal H2A/H2B, leading to transcriptional regulation of selected genes by chromatin remodeling.</text>
</comment>
<comment type="subunit">
    <text evidence="1 4">Component of the NuA4 histone acetyltransferase complex which contains the catalytic subunit KAT5/TIP60 and the subunits EP400, TRRAP/PAF400, BRD8/SMAP, EPC1, DMAP1/DNMAP1, RUVBL1/TIP49, RUVBL2, ING3, actin, ACTL6A/BAF53A, MORF4L1/MRG15, MORF4L2/MRGX, MRGBP, YEATS4/GAS41 and VPS72/YL1. Component of a NuA4-related complex which contains EP400, TRRAP/PAF400, SRCAP, BRD8/SMAP, EPC1, DMAP1/DNMAP1, RUVBL1/TIP49, RUVBL2, actin, ACTL6A/BAF53A, VPS72 and YEATS4/GAS41. Also part of a multiprotein complex which contains SRCAP and which binds to H2AZ1/H2AZ. Interacts (via N-terminal domain) with H2AZ1; the interaction is enhanced by VPS72 phosphorylation which is promoted by ZNHIT1 (PubMed:30842416).</text>
</comment>
<comment type="subcellular location">
    <subcellularLocation>
        <location evidence="1">Nucleus</location>
    </subcellularLocation>
</comment>
<comment type="tissue specificity">
    <text>In all tissues examined, most abundantly in brain and thymus.</text>
</comment>
<comment type="PTM">
    <text evidence="4">Phosphorylation is enhanced by ZNHIT1 and promotes the interaction of VPS72 with histone H2AZ1.</text>
</comment>
<comment type="similarity">
    <text evidence="5">Belongs to the VPS72/YL1 family.</text>
</comment>
<accession>Q62481</accession>
<accession>Q3U2N4</accession>
<accession>Q810A9</accession>
<accession>Q99K81</accession>
<reference key="1">
    <citation type="journal article" date="1995" name="Biochem. Biophys. Res. Commun.">
        <title>Molecular cloning of a novel human cDNA on chromosome 1q21 and its mouse homolog encoding a nuclear protein with DNA-binding ability.</title>
        <authorList>
            <person name="Horikawa I."/>
            <person name="Tanaka H."/>
            <person name="Yuasa Y."/>
            <person name="Suzuki M."/>
            <person name="Oshimura M."/>
        </authorList>
    </citation>
    <scope>NUCLEOTIDE SEQUENCE [MRNA]</scope>
    <source>
        <strain>BALB/cJ</strain>
        <tissue>Brain</tissue>
    </source>
</reference>
<reference key="2">
    <citation type="journal article" date="2005" name="Science">
        <title>The transcriptional landscape of the mammalian genome.</title>
        <authorList>
            <person name="Carninci P."/>
            <person name="Kasukawa T."/>
            <person name="Katayama S."/>
            <person name="Gough J."/>
            <person name="Frith M.C."/>
            <person name="Maeda N."/>
            <person name="Oyama R."/>
            <person name="Ravasi T."/>
            <person name="Lenhard B."/>
            <person name="Wells C."/>
            <person name="Kodzius R."/>
            <person name="Shimokawa K."/>
            <person name="Bajic V.B."/>
            <person name="Brenner S.E."/>
            <person name="Batalov S."/>
            <person name="Forrest A.R."/>
            <person name="Zavolan M."/>
            <person name="Davis M.J."/>
            <person name="Wilming L.G."/>
            <person name="Aidinis V."/>
            <person name="Allen J.E."/>
            <person name="Ambesi-Impiombato A."/>
            <person name="Apweiler R."/>
            <person name="Aturaliya R.N."/>
            <person name="Bailey T.L."/>
            <person name="Bansal M."/>
            <person name="Baxter L."/>
            <person name="Beisel K.W."/>
            <person name="Bersano T."/>
            <person name="Bono H."/>
            <person name="Chalk A.M."/>
            <person name="Chiu K.P."/>
            <person name="Choudhary V."/>
            <person name="Christoffels A."/>
            <person name="Clutterbuck D.R."/>
            <person name="Crowe M.L."/>
            <person name="Dalla E."/>
            <person name="Dalrymple B.P."/>
            <person name="de Bono B."/>
            <person name="Della Gatta G."/>
            <person name="di Bernardo D."/>
            <person name="Down T."/>
            <person name="Engstrom P."/>
            <person name="Fagiolini M."/>
            <person name="Faulkner G."/>
            <person name="Fletcher C.F."/>
            <person name="Fukushima T."/>
            <person name="Furuno M."/>
            <person name="Futaki S."/>
            <person name="Gariboldi M."/>
            <person name="Georgii-Hemming P."/>
            <person name="Gingeras T.R."/>
            <person name="Gojobori T."/>
            <person name="Green R.E."/>
            <person name="Gustincich S."/>
            <person name="Harbers M."/>
            <person name="Hayashi Y."/>
            <person name="Hensch T.K."/>
            <person name="Hirokawa N."/>
            <person name="Hill D."/>
            <person name="Huminiecki L."/>
            <person name="Iacono M."/>
            <person name="Ikeo K."/>
            <person name="Iwama A."/>
            <person name="Ishikawa T."/>
            <person name="Jakt M."/>
            <person name="Kanapin A."/>
            <person name="Katoh M."/>
            <person name="Kawasawa Y."/>
            <person name="Kelso J."/>
            <person name="Kitamura H."/>
            <person name="Kitano H."/>
            <person name="Kollias G."/>
            <person name="Krishnan S.P."/>
            <person name="Kruger A."/>
            <person name="Kummerfeld S.K."/>
            <person name="Kurochkin I.V."/>
            <person name="Lareau L.F."/>
            <person name="Lazarevic D."/>
            <person name="Lipovich L."/>
            <person name="Liu J."/>
            <person name="Liuni S."/>
            <person name="McWilliam S."/>
            <person name="Madan Babu M."/>
            <person name="Madera M."/>
            <person name="Marchionni L."/>
            <person name="Matsuda H."/>
            <person name="Matsuzawa S."/>
            <person name="Miki H."/>
            <person name="Mignone F."/>
            <person name="Miyake S."/>
            <person name="Morris K."/>
            <person name="Mottagui-Tabar S."/>
            <person name="Mulder N."/>
            <person name="Nakano N."/>
            <person name="Nakauchi H."/>
            <person name="Ng P."/>
            <person name="Nilsson R."/>
            <person name="Nishiguchi S."/>
            <person name="Nishikawa S."/>
            <person name="Nori F."/>
            <person name="Ohara O."/>
            <person name="Okazaki Y."/>
            <person name="Orlando V."/>
            <person name="Pang K.C."/>
            <person name="Pavan W.J."/>
            <person name="Pavesi G."/>
            <person name="Pesole G."/>
            <person name="Petrovsky N."/>
            <person name="Piazza S."/>
            <person name="Reed J."/>
            <person name="Reid J.F."/>
            <person name="Ring B.Z."/>
            <person name="Ringwald M."/>
            <person name="Rost B."/>
            <person name="Ruan Y."/>
            <person name="Salzberg S.L."/>
            <person name="Sandelin A."/>
            <person name="Schneider C."/>
            <person name="Schoenbach C."/>
            <person name="Sekiguchi K."/>
            <person name="Semple C.A."/>
            <person name="Seno S."/>
            <person name="Sessa L."/>
            <person name="Sheng Y."/>
            <person name="Shibata Y."/>
            <person name="Shimada H."/>
            <person name="Shimada K."/>
            <person name="Silva D."/>
            <person name="Sinclair B."/>
            <person name="Sperling S."/>
            <person name="Stupka E."/>
            <person name="Sugiura K."/>
            <person name="Sultana R."/>
            <person name="Takenaka Y."/>
            <person name="Taki K."/>
            <person name="Tammoja K."/>
            <person name="Tan S.L."/>
            <person name="Tang S."/>
            <person name="Taylor M.S."/>
            <person name="Tegner J."/>
            <person name="Teichmann S.A."/>
            <person name="Ueda H.R."/>
            <person name="van Nimwegen E."/>
            <person name="Verardo R."/>
            <person name="Wei C.L."/>
            <person name="Yagi K."/>
            <person name="Yamanishi H."/>
            <person name="Zabarovsky E."/>
            <person name="Zhu S."/>
            <person name="Zimmer A."/>
            <person name="Hide W."/>
            <person name="Bult C."/>
            <person name="Grimmond S.M."/>
            <person name="Teasdale R.D."/>
            <person name="Liu E.T."/>
            <person name="Brusic V."/>
            <person name="Quackenbush J."/>
            <person name="Wahlestedt C."/>
            <person name="Mattick J.S."/>
            <person name="Hume D.A."/>
            <person name="Kai C."/>
            <person name="Sasaki D."/>
            <person name="Tomaru Y."/>
            <person name="Fukuda S."/>
            <person name="Kanamori-Katayama M."/>
            <person name="Suzuki M."/>
            <person name="Aoki J."/>
            <person name="Arakawa T."/>
            <person name="Iida J."/>
            <person name="Imamura K."/>
            <person name="Itoh M."/>
            <person name="Kato T."/>
            <person name="Kawaji H."/>
            <person name="Kawagashira N."/>
            <person name="Kawashima T."/>
            <person name="Kojima M."/>
            <person name="Kondo S."/>
            <person name="Konno H."/>
            <person name="Nakano K."/>
            <person name="Ninomiya N."/>
            <person name="Nishio T."/>
            <person name="Okada M."/>
            <person name="Plessy C."/>
            <person name="Shibata K."/>
            <person name="Shiraki T."/>
            <person name="Suzuki S."/>
            <person name="Tagami M."/>
            <person name="Waki K."/>
            <person name="Watahiki A."/>
            <person name="Okamura-Oho Y."/>
            <person name="Suzuki H."/>
            <person name="Kawai J."/>
            <person name="Hayashizaki Y."/>
        </authorList>
    </citation>
    <scope>NUCLEOTIDE SEQUENCE [LARGE SCALE MRNA]</scope>
    <source>
        <strain>C57BL/6J</strain>
        <strain>NOD</strain>
        <tissue>Corpora quadrigemina</tissue>
        <tissue>Dendritic cell</tissue>
    </source>
</reference>
<reference key="3">
    <citation type="journal article" date="2004" name="Genome Res.">
        <title>The status, quality, and expansion of the NIH full-length cDNA project: the Mammalian Gene Collection (MGC).</title>
        <authorList>
            <consortium name="The MGC Project Team"/>
        </authorList>
    </citation>
    <scope>NUCLEOTIDE SEQUENCE [LARGE SCALE MRNA]</scope>
    <source>
        <strain>C57BL/6J</strain>
        <strain>Czech II</strain>
        <tissue>Brain</tissue>
        <tissue>Mammary gland</tissue>
    </source>
</reference>
<reference key="4">
    <citation type="journal article" date="2019" name="Nat. Commun.">
        <title>Znhit1 controls intestinal stem cell maintenance by regulating H2A.Z incorporation.</title>
        <authorList>
            <person name="Zhao B."/>
            <person name="Chen Y."/>
            <person name="Jiang N."/>
            <person name="Yang L."/>
            <person name="Sun S."/>
            <person name="Zhang Y."/>
            <person name="Wen Z."/>
            <person name="Ray L."/>
            <person name="Liu H."/>
            <person name="Hou G."/>
            <person name="Lin X."/>
        </authorList>
    </citation>
    <scope>INTERACTION WITH H2AZ1</scope>
    <scope>PHOSPHORYLATION</scope>
</reference>
<keyword id="KW-0156">Chromatin regulator</keyword>
<keyword id="KW-0238">DNA-binding</keyword>
<keyword id="KW-1017">Isopeptide bond</keyword>
<keyword id="KW-0539">Nucleus</keyword>
<keyword id="KW-0597">Phosphoprotein</keyword>
<keyword id="KW-1185">Reference proteome</keyword>
<keyword id="KW-0804">Transcription</keyword>
<keyword id="KW-0805">Transcription regulation</keyword>
<keyword id="KW-0832">Ubl conjugation</keyword>
<feature type="chain" id="PRO_0000066284" description="Vacuolar protein sorting-associated protein 72 homolog">
    <location>
        <begin position="1"/>
        <end position="368"/>
    </location>
</feature>
<feature type="DNA-binding region" evidence="2">
    <location>
        <begin position="156"/>
        <end position="206"/>
    </location>
</feature>
<feature type="region of interest" description="Disordered" evidence="3">
    <location>
        <begin position="1"/>
        <end position="164"/>
    </location>
</feature>
<feature type="region of interest" description="Disordered" evidence="3">
    <location>
        <begin position="339"/>
        <end position="361"/>
    </location>
</feature>
<feature type="compositionally biased region" description="Acidic residues" evidence="3">
    <location>
        <begin position="40"/>
        <end position="75"/>
    </location>
</feature>
<feature type="compositionally biased region" description="Basic and acidic residues" evidence="3">
    <location>
        <begin position="127"/>
        <end position="142"/>
    </location>
</feature>
<feature type="compositionally biased region" description="Pro residues" evidence="3">
    <location>
        <begin position="345"/>
        <end position="355"/>
    </location>
</feature>
<feature type="modified residue" description="Phosphoserine" evidence="1">
    <location>
        <position position="127"/>
    </location>
</feature>
<feature type="modified residue" description="Phosphoserine" evidence="1">
    <location>
        <position position="129"/>
    </location>
</feature>
<feature type="cross-link" description="Glycyl lysine isopeptide (Lys-Gly) (interchain with G-Cter in SUMO2)" evidence="1">
    <location>
        <position position="115"/>
    </location>
</feature>
<feature type="sequence conflict" description="In Ref. 3; AAH04834." evidence="5" ref="3">
    <original>A</original>
    <variation>S</variation>
    <location>
        <position position="75"/>
    </location>
</feature>
<feature type="sequence conflict" description="In Ref. 1; BAA07758 and 2; BAE33106." evidence="5" ref="1 2">
    <original>A</original>
    <variation>V</variation>
    <location>
        <position position="247"/>
    </location>
</feature>
<feature type="sequence conflict" description="In Ref. 3; AAH04834." evidence="5" ref="3">
    <original>T</original>
    <variation>A</variation>
    <location>
        <position position="260"/>
    </location>
</feature>
<gene>
    <name type="primary">Vps72</name>
    <name type="synonym">Tcfl1</name>
    <name type="synonym">Yl1</name>
</gene>
<dbReference type="EMBL" id="D43643">
    <property type="protein sequence ID" value="BAA07758.1"/>
    <property type="molecule type" value="mRNA"/>
</dbReference>
<dbReference type="EMBL" id="AK140284">
    <property type="protein sequence ID" value="BAE24317.1"/>
    <property type="molecule type" value="mRNA"/>
</dbReference>
<dbReference type="EMBL" id="AK155191">
    <property type="protein sequence ID" value="BAE33106.1"/>
    <property type="molecule type" value="mRNA"/>
</dbReference>
<dbReference type="EMBL" id="BC004834">
    <property type="protein sequence ID" value="AAH04834.1"/>
    <property type="molecule type" value="mRNA"/>
</dbReference>
<dbReference type="EMBL" id="BC043029">
    <property type="protein sequence ID" value="AAH43029.2"/>
    <property type="molecule type" value="mRNA"/>
</dbReference>
<dbReference type="CCDS" id="CCDS38543.1"/>
<dbReference type="PIR" id="JC4141">
    <property type="entry name" value="JC4141"/>
</dbReference>
<dbReference type="RefSeq" id="NP_033362.2">
    <property type="nucleotide sequence ID" value="NM_009336.2"/>
</dbReference>
<dbReference type="SMR" id="Q62481"/>
<dbReference type="BioGRID" id="204018">
    <property type="interactions" value="3"/>
</dbReference>
<dbReference type="ComplexPortal" id="CPX-976">
    <property type="entry name" value="SRCAP chromatin remodeling complex"/>
</dbReference>
<dbReference type="ComplexPortal" id="CPX-990">
    <property type="entry name" value="NuA4 histone acetyltransferase complex"/>
</dbReference>
<dbReference type="FunCoup" id="Q62481">
    <property type="interactions" value="3068"/>
</dbReference>
<dbReference type="IntAct" id="Q62481">
    <property type="interactions" value="5"/>
</dbReference>
<dbReference type="MINT" id="Q62481"/>
<dbReference type="STRING" id="10090.ENSMUSP00000009102"/>
<dbReference type="GlyGen" id="Q62481">
    <property type="glycosylation" value="2 sites"/>
</dbReference>
<dbReference type="iPTMnet" id="Q62481"/>
<dbReference type="PhosphoSitePlus" id="Q62481"/>
<dbReference type="PaxDb" id="10090-ENSMUSP00000009102"/>
<dbReference type="PeptideAtlas" id="Q62481"/>
<dbReference type="ProteomicsDB" id="275189"/>
<dbReference type="Pumba" id="Q62481"/>
<dbReference type="Antibodypedia" id="20319">
    <property type="antibodies" value="180 antibodies from 31 providers"/>
</dbReference>
<dbReference type="DNASU" id="21427"/>
<dbReference type="Ensembl" id="ENSMUST00000009102.9">
    <property type="protein sequence ID" value="ENSMUSP00000009102.9"/>
    <property type="gene ID" value="ENSMUSG00000008958.15"/>
</dbReference>
<dbReference type="GeneID" id="21427"/>
<dbReference type="KEGG" id="mmu:21427"/>
<dbReference type="UCSC" id="uc008qia.1">
    <property type="organism name" value="mouse"/>
</dbReference>
<dbReference type="AGR" id="MGI:1202305"/>
<dbReference type="CTD" id="6944"/>
<dbReference type="MGI" id="MGI:1202305">
    <property type="gene designation" value="Vps72"/>
</dbReference>
<dbReference type="VEuPathDB" id="HostDB:ENSMUSG00000008958"/>
<dbReference type="eggNOG" id="KOG2897">
    <property type="taxonomic scope" value="Eukaryota"/>
</dbReference>
<dbReference type="GeneTree" id="ENSGT00390000017503"/>
<dbReference type="HOGENOM" id="CLU_040862_0_0_1"/>
<dbReference type="InParanoid" id="Q62481"/>
<dbReference type="OMA" id="TGPTIRY"/>
<dbReference type="OrthoDB" id="78296at2759"/>
<dbReference type="PhylomeDB" id="Q62481"/>
<dbReference type="TreeFam" id="TF314532"/>
<dbReference type="BioGRID-ORCS" id="21427">
    <property type="hits" value="26 hits in 80 CRISPR screens"/>
</dbReference>
<dbReference type="ChiTaRS" id="Vps72">
    <property type="organism name" value="mouse"/>
</dbReference>
<dbReference type="PRO" id="PR:Q62481"/>
<dbReference type="Proteomes" id="UP000000589">
    <property type="component" value="Chromosome 3"/>
</dbReference>
<dbReference type="RNAct" id="Q62481">
    <property type="molecule type" value="protein"/>
</dbReference>
<dbReference type="Bgee" id="ENSMUSG00000008958">
    <property type="expression patterns" value="Expressed in ventricular zone and 229 other cell types or tissues"/>
</dbReference>
<dbReference type="GO" id="GO:0035267">
    <property type="term" value="C:NuA4 histone acetyltransferase complex"/>
    <property type="evidence" value="ECO:0000266"/>
    <property type="project" value="ComplexPortal"/>
</dbReference>
<dbReference type="GO" id="GO:0016607">
    <property type="term" value="C:nuclear speck"/>
    <property type="evidence" value="ECO:0007669"/>
    <property type="project" value="Ensembl"/>
</dbReference>
<dbReference type="GO" id="GO:0000786">
    <property type="term" value="C:nucleosome"/>
    <property type="evidence" value="ECO:0000266"/>
    <property type="project" value="ComplexPortal"/>
</dbReference>
<dbReference type="GO" id="GO:0032991">
    <property type="term" value="C:protein-containing complex"/>
    <property type="evidence" value="ECO:0000250"/>
    <property type="project" value="UniProtKB"/>
</dbReference>
<dbReference type="GO" id="GO:0003677">
    <property type="term" value="F:DNA binding"/>
    <property type="evidence" value="ECO:0007669"/>
    <property type="project" value="UniProtKB-KW"/>
</dbReference>
<dbReference type="GO" id="GO:0042393">
    <property type="term" value="F:histone binding"/>
    <property type="evidence" value="ECO:0000353"/>
    <property type="project" value="UniProtKB"/>
</dbReference>
<dbReference type="GO" id="GO:0140713">
    <property type="term" value="F:histone chaperone activity"/>
    <property type="evidence" value="ECO:0000250"/>
    <property type="project" value="UniProtKB"/>
</dbReference>
<dbReference type="GO" id="GO:0045893">
    <property type="term" value="P:positive regulation of DNA-templated transcription"/>
    <property type="evidence" value="ECO:0000303"/>
    <property type="project" value="ComplexPortal"/>
</dbReference>
<dbReference type="GO" id="GO:1905168">
    <property type="term" value="P:positive regulation of double-strand break repair via homologous recombination"/>
    <property type="evidence" value="ECO:0000266"/>
    <property type="project" value="ComplexPortal"/>
</dbReference>
<dbReference type="GO" id="GO:0042981">
    <property type="term" value="P:regulation of apoptotic process"/>
    <property type="evidence" value="ECO:0000303"/>
    <property type="project" value="ComplexPortal"/>
</dbReference>
<dbReference type="GO" id="GO:0051726">
    <property type="term" value="P:regulation of cell cycle"/>
    <property type="evidence" value="ECO:0000266"/>
    <property type="project" value="ComplexPortal"/>
</dbReference>
<dbReference type="GO" id="GO:0006355">
    <property type="term" value="P:regulation of DNA-templated transcription"/>
    <property type="evidence" value="ECO:0000303"/>
    <property type="project" value="ComplexPortal"/>
</dbReference>
<dbReference type="GO" id="GO:2000779">
    <property type="term" value="P:regulation of double-strand break repair"/>
    <property type="evidence" value="ECO:0000303"/>
    <property type="project" value="ComplexPortal"/>
</dbReference>
<dbReference type="GO" id="GO:0035019">
    <property type="term" value="P:somatic stem cell population maintenance"/>
    <property type="evidence" value="ECO:0000314"/>
    <property type="project" value="MGI"/>
</dbReference>
<dbReference type="GO" id="GO:0045815">
    <property type="term" value="P:transcription initiation-coupled chromatin remodeling"/>
    <property type="evidence" value="ECO:0000250"/>
    <property type="project" value="UniProtKB"/>
</dbReference>
<dbReference type="InterPro" id="IPR013272">
    <property type="entry name" value="Vps72/YL1_C"/>
</dbReference>
<dbReference type="InterPro" id="IPR046757">
    <property type="entry name" value="YL1_N"/>
</dbReference>
<dbReference type="PANTHER" id="PTHR13275:SF4">
    <property type="entry name" value="VACUOLAR PROTEIN SORTING-ASSOCIATED PROTEIN 72 HOMOLOG"/>
    <property type="match status" value="1"/>
</dbReference>
<dbReference type="PANTHER" id="PTHR13275">
    <property type="entry name" value="YL-1 PROTEIN TRANSCRIPTION FACTOR-LIKE 1"/>
    <property type="match status" value="1"/>
</dbReference>
<dbReference type="Pfam" id="PF05764">
    <property type="entry name" value="YL1"/>
    <property type="match status" value="1"/>
</dbReference>
<dbReference type="Pfam" id="PF08265">
    <property type="entry name" value="YL1_C"/>
    <property type="match status" value="1"/>
</dbReference>
<dbReference type="SMART" id="SM00993">
    <property type="entry name" value="YL1_C"/>
    <property type="match status" value="1"/>
</dbReference>
<sequence>MSLAGGRAPRKTAGNRLSGLLEAEEEDEFYQTTYGGFTEESGDDEYQGDQSDTEDEVDSDFDIDEGDEPSSDGEAEEPRRKRRVVTKAYKEPLKSLRPRKVSTPASSSQKAREEKTLLPLELQDDGSDSRKSMRQSTAEHTRQTFLRVQERQGQSRRRKGPHCERPLTQEELLREAKITEELNLRSLETYERLEADKKKQVHKKRKCPGPIITYHSVTVPLVGEPGPKEENVDVEGLDPAPTASALAPHAGTGTGAAAATPPAHCSRTFITFSDDATFEEWFPQGRPPKVPVREVCPVTHRPALYRDPVTDIPYATARAFKIIREAYKKYITAHGLPPTASALGPGPPPPEPLPGSGPRALRQKIVIK</sequence>
<evidence type="ECO:0000250" key="1">
    <source>
        <dbReference type="UniProtKB" id="Q15906"/>
    </source>
</evidence>
<evidence type="ECO:0000255" key="2"/>
<evidence type="ECO:0000256" key="3">
    <source>
        <dbReference type="SAM" id="MobiDB-lite"/>
    </source>
</evidence>
<evidence type="ECO:0000269" key="4">
    <source>
    </source>
</evidence>
<evidence type="ECO:0000305" key="5"/>
<protein>
    <recommendedName>
        <fullName>Vacuolar protein sorting-associated protein 72 homolog</fullName>
    </recommendedName>
    <alternativeName>
        <fullName>Protein YL-1</fullName>
    </alternativeName>
    <alternativeName>
        <fullName>Transcription factor-like 1</fullName>
    </alternativeName>
</protein>
<organism>
    <name type="scientific">Mus musculus</name>
    <name type="common">Mouse</name>
    <dbReference type="NCBI Taxonomy" id="10090"/>
    <lineage>
        <taxon>Eukaryota</taxon>
        <taxon>Metazoa</taxon>
        <taxon>Chordata</taxon>
        <taxon>Craniata</taxon>
        <taxon>Vertebrata</taxon>
        <taxon>Euteleostomi</taxon>
        <taxon>Mammalia</taxon>
        <taxon>Eutheria</taxon>
        <taxon>Euarchontoglires</taxon>
        <taxon>Glires</taxon>
        <taxon>Rodentia</taxon>
        <taxon>Myomorpha</taxon>
        <taxon>Muroidea</taxon>
        <taxon>Muridae</taxon>
        <taxon>Murinae</taxon>
        <taxon>Mus</taxon>
        <taxon>Mus</taxon>
    </lineage>
</organism>